<accession>B8F7B7</accession>
<comment type="function">
    <text evidence="1">Part of a membrane-bound complex that couples electron transfer with translocation of ions across the membrane.</text>
</comment>
<comment type="subunit">
    <text evidence="1">The complex is composed of six subunits: RnfA, RnfB, RnfC, RnfD, RnfE and RnfG.</text>
</comment>
<comment type="subcellular location">
    <subcellularLocation>
        <location evidence="1">Cell inner membrane</location>
        <topology evidence="1">Multi-pass membrane protein</topology>
    </subcellularLocation>
</comment>
<comment type="similarity">
    <text evidence="1">Belongs to the NqrDE/RnfAE family.</text>
</comment>
<name>RNFA_GLAP5</name>
<keyword id="KW-0997">Cell inner membrane</keyword>
<keyword id="KW-1003">Cell membrane</keyword>
<keyword id="KW-0249">Electron transport</keyword>
<keyword id="KW-0472">Membrane</keyword>
<keyword id="KW-1185">Reference proteome</keyword>
<keyword id="KW-1278">Translocase</keyword>
<keyword id="KW-0812">Transmembrane</keyword>
<keyword id="KW-1133">Transmembrane helix</keyword>
<keyword id="KW-0813">Transport</keyword>
<reference key="1">
    <citation type="journal article" date="2009" name="J. Bacteriol.">
        <title>Complete genome sequence of Haemophilus parasuis SH0165.</title>
        <authorList>
            <person name="Yue M."/>
            <person name="Yang F."/>
            <person name="Yang J."/>
            <person name="Bei W."/>
            <person name="Cai X."/>
            <person name="Chen L."/>
            <person name="Dong J."/>
            <person name="Zhou R."/>
            <person name="Jin M."/>
            <person name="Jin Q."/>
            <person name="Chen H."/>
        </authorList>
    </citation>
    <scope>NUCLEOTIDE SEQUENCE [LARGE SCALE GENOMIC DNA]</scope>
    <source>
        <strain>SH0165</strain>
    </source>
</reference>
<proteinExistence type="inferred from homology"/>
<protein>
    <recommendedName>
        <fullName evidence="1">Ion-translocating oxidoreductase complex subunit A</fullName>
        <ecNumber evidence="1">7.-.-.-</ecNumber>
    </recommendedName>
    <alternativeName>
        <fullName evidence="1">Rnf electron transport complex subunit A</fullName>
    </alternativeName>
</protein>
<gene>
    <name evidence="1" type="primary">rnfA</name>
    <name type="ordered locus">HAPS_1676</name>
</gene>
<feature type="chain" id="PRO_1000191726" description="Ion-translocating oxidoreductase complex subunit A">
    <location>
        <begin position="1"/>
        <end position="193"/>
    </location>
</feature>
<feature type="transmembrane region" description="Helical" evidence="1">
    <location>
        <begin position="5"/>
        <end position="25"/>
    </location>
</feature>
<feature type="transmembrane region" description="Helical" evidence="1">
    <location>
        <begin position="39"/>
        <end position="59"/>
    </location>
</feature>
<feature type="transmembrane region" description="Helical" evidence="1">
    <location>
        <begin position="65"/>
        <end position="85"/>
    </location>
</feature>
<feature type="transmembrane region" description="Helical" evidence="1">
    <location>
        <begin position="102"/>
        <end position="122"/>
    </location>
</feature>
<feature type="transmembrane region" description="Helical" evidence="1">
    <location>
        <begin position="134"/>
        <end position="154"/>
    </location>
</feature>
<feature type="transmembrane region" description="Helical" evidence="1">
    <location>
        <begin position="171"/>
        <end position="191"/>
    </location>
</feature>
<evidence type="ECO:0000255" key="1">
    <source>
        <dbReference type="HAMAP-Rule" id="MF_00459"/>
    </source>
</evidence>
<organism>
    <name type="scientific">Glaesserella parasuis serovar 5 (strain SH0165)</name>
    <name type="common">Haemophilus parasuis</name>
    <dbReference type="NCBI Taxonomy" id="557723"/>
    <lineage>
        <taxon>Bacteria</taxon>
        <taxon>Pseudomonadati</taxon>
        <taxon>Pseudomonadota</taxon>
        <taxon>Gammaproteobacteria</taxon>
        <taxon>Pasteurellales</taxon>
        <taxon>Pasteurellaceae</taxon>
        <taxon>Glaesserella</taxon>
    </lineage>
</organism>
<dbReference type="EC" id="7.-.-.-" evidence="1"/>
<dbReference type="EMBL" id="CP001321">
    <property type="protein sequence ID" value="ACL33219.1"/>
    <property type="molecule type" value="Genomic_DNA"/>
</dbReference>
<dbReference type="SMR" id="B8F7B7"/>
<dbReference type="STRING" id="557723.HAPS_1676"/>
<dbReference type="KEGG" id="hap:HAPS_1676"/>
<dbReference type="PATRIC" id="fig|557723.8.peg.1647"/>
<dbReference type="HOGENOM" id="CLU_095255_1_0_6"/>
<dbReference type="Proteomes" id="UP000006743">
    <property type="component" value="Chromosome"/>
</dbReference>
<dbReference type="GO" id="GO:0005886">
    <property type="term" value="C:plasma membrane"/>
    <property type="evidence" value="ECO:0007669"/>
    <property type="project" value="UniProtKB-SubCell"/>
</dbReference>
<dbReference type="GO" id="GO:0022900">
    <property type="term" value="P:electron transport chain"/>
    <property type="evidence" value="ECO:0007669"/>
    <property type="project" value="UniProtKB-UniRule"/>
</dbReference>
<dbReference type="HAMAP" id="MF_00459">
    <property type="entry name" value="RsxA_RnfA"/>
    <property type="match status" value="1"/>
</dbReference>
<dbReference type="InterPro" id="IPR011293">
    <property type="entry name" value="Ion_transpt_RnfA/RsxA"/>
</dbReference>
<dbReference type="InterPro" id="IPR003667">
    <property type="entry name" value="NqrDE/RnfAE"/>
</dbReference>
<dbReference type="InterPro" id="IPR050133">
    <property type="entry name" value="NqrDE/RnfAE_oxidrdctase"/>
</dbReference>
<dbReference type="NCBIfam" id="NF003481">
    <property type="entry name" value="PRK05151.1"/>
    <property type="match status" value="1"/>
</dbReference>
<dbReference type="NCBIfam" id="TIGR01943">
    <property type="entry name" value="rnfA"/>
    <property type="match status" value="1"/>
</dbReference>
<dbReference type="PANTHER" id="PTHR30335">
    <property type="entry name" value="INTEGRAL MEMBRANE PROTEIN OF SOXR-REDUCING COMPLEX"/>
    <property type="match status" value="1"/>
</dbReference>
<dbReference type="PANTHER" id="PTHR30335:SF0">
    <property type="entry name" value="ION-TRANSLOCATING OXIDOREDUCTASE COMPLEX SUBUNIT A"/>
    <property type="match status" value="1"/>
</dbReference>
<dbReference type="Pfam" id="PF02508">
    <property type="entry name" value="Rnf-Nqr"/>
    <property type="match status" value="1"/>
</dbReference>
<dbReference type="PIRSF" id="PIRSF006102">
    <property type="entry name" value="NQR_DE"/>
    <property type="match status" value="1"/>
</dbReference>
<sequence length="193" mass="20682">MVEYILLIISTALINNFVLVKFLGLCPFMGVSKKVETAIGMGMATTFVLTVASLSAYLVETYLLIPLEAEFLRTLVFILVIAVIVQLTEMIVHKTSSALYRLLGIYLPLITTNCAVLGVALLNVNLSNNLVQSVLYGFGAAAGFSLVLVLFSALRERLVAADVPRAFQGASIALITAGLMSLAFMGFTGLVKI</sequence>